<evidence type="ECO:0000250" key="1">
    <source>
        <dbReference type="UniProtKB" id="P02649"/>
    </source>
</evidence>
<evidence type="ECO:0000250" key="2">
    <source>
        <dbReference type="UniProtKB" id="P08226"/>
    </source>
</evidence>
<evidence type="ECO:0000255" key="3"/>
<evidence type="ECO:0000269" key="4">
    <source>
    </source>
</evidence>
<evidence type="ECO:0000305" key="5"/>
<dbReference type="PIR" id="JC6549">
    <property type="entry name" value="JC6549"/>
</dbReference>
<dbReference type="RefSeq" id="XP_027834259.1">
    <property type="nucleotide sequence ID" value="XM_027978458.2"/>
</dbReference>
<dbReference type="RefSeq" id="XP_027834261.1">
    <property type="nucleotide sequence ID" value="XM_027978460.2"/>
</dbReference>
<dbReference type="RefSeq" id="XP_027834262.1">
    <property type="nucleotide sequence ID" value="XM_027978461.2"/>
</dbReference>
<dbReference type="SMR" id="Q7M2U8"/>
<dbReference type="STRING" id="9940.ENSOARP00000010129"/>
<dbReference type="PaxDb" id="9940-ENSOARP00000010129"/>
<dbReference type="GeneID" id="101112253"/>
<dbReference type="eggNOG" id="ENOG502QVD6">
    <property type="taxonomic scope" value="Eukaryota"/>
</dbReference>
<dbReference type="OrthoDB" id="9048614at2759"/>
<dbReference type="Proteomes" id="UP000002356">
    <property type="component" value="Unplaced"/>
</dbReference>
<dbReference type="GO" id="GO:0042627">
    <property type="term" value="C:chylomicron"/>
    <property type="evidence" value="ECO:0007669"/>
    <property type="project" value="UniProtKB-KW"/>
</dbReference>
<dbReference type="GO" id="GO:0070062">
    <property type="term" value="C:extracellular exosome"/>
    <property type="evidence" value="ECO:0000250"/>
    <property type="project" value="UniProtKB"/>
</dbReference>
<dbReference type="GO" id="GO:0031012">
    <property type="term" value="C:extracellular matrix"/>
    <property type="evidence" value="ECO:0000250"/>
    <property type="project" value="UniProtKB"/>
</dbReference>
<dbReference type="GO" id="GO:0005615">
    <property type="term" value="C:extracellular space"/>
    <property type="evidence" value="ECO:0000250"/>
    <property type="project" value="UniProtKB"/>
</dbReference>
<dbReference type="GO" id="GO:0034364">
    <property type="term" value="C:high-density lipoprotein particle"/>
    <property type="evidence" value="ECO:0000250"/>
    <property type="project" value="UniProtKB"/>
</dbReference>
<dbReference type="GO" id="GO:0034363">
    <property type="term" value="C:intermediate-density lipoprotein particle"/>
    <property type="evidence" value="ECO:0000250"/>
    <property type="project" value="UniProtKB"/>
</dbReference>
<dbReference type="GO" id="GO:0034362">
    <property type="term" value="C:low-density lipoprotein particle"/>
    <property type="evidence" value="ECO:0000250"/>
    <property type="project" value="UniProtKB"/>
</dbReference>
<dbReference type="GO" id="GO:0097487">
    <property type="term" value="C:multivesicular body, internal vesicle"/>
    <property type="evidence" value="ECO:0000250"/>
    <property type="project" value="UniProtKB"/>
</dbReference>
<dbReference type="GO" id="GO:0034361">
    <property type="term" value="C:very-low-density lipoprotein particle"/>
    <property type="evidence" value="ECO:0000250"/>
    <property type="project" value="UniProtKB"/>
</dbReference>
<dbReference type="GO" id="GO:0120020">
    <property type="term" value="F:cholesterol transfer activity"/>
    <property type="evidence" value="ECO:0007669"/>
    <property type="project" value="TreeGrafter"/>
</dbReference>
<dbReference type="GO" id="GO:0043395">
    <property type="term" value="F:heparan sulfate proteoglycan binding"/>
    <property type="evidence" value="ECO:0000250"/>
    <property type="project" value="UniProtKB"/>
</dbReference>
<dbReference type="GO" id="GO:0008201">
    <property type="term" value="F:heparin binding"/>
    <property type="evidence" value="ECO:0000250"/>
    <property type="project" value="UniProtKB"/>
</dbReference>
<dbReference type="GO" id="GO:0042802">
    <property type="term" value="F:identical protein binding"/>
    <property type="evidence" value="ECO:0000250"/>
    <property type="project" value="UniProtKB"/>
</dbReference>
<dbReference type="GO" id="GO:0050750">
    <property type="term" value="F:low-density lipoprotein particle receptor binding"/>
    <property type="evidence" value="ECO:0000250"/>
    <property type="project" value="UniProtKB"/>
</dbReference>
<dbReference type="GO" id="GO:0060228">
    <property type="term" value="F:phosphatidylcholine-sterol O-acyltransferase activator activity"/>
    <property type="evidence" value="ECO:0007669"/>
    <property type="project" value="TreeGrafter"/>
</dbReference>
<dbReference type="GO" id="GO:0005543">
    <property type="term" value="F:phospholipid binding"/>
    <property type="evidence" value="ECO:0007669"/>
    <property type="project" value="TreeGrafter"/>
</dbReference>
<dbReference type="GO" id="GO:0055090">
    <property type="term" value="P:acylglycerol homeostasis"/>
    <property type="evidence" value="ECO:0007669"/>
    <property type="project" value="TreeGrafter"/>
</dbReference>
<dbReference type="GO" id="GO:0033344">
    <property type="term" value="P:cholesterol efflux"/>
    <property type="evidence" value="ECO:0000250"/>
    <property type="project" value="UniProtKB"/>
</dbReference>
<dbReference type="GO" id="GO:0008203">
    <property type="term" value="P:cholesterol metabolic process"/>
    <property type="evidence" value="ECO:0007669"/>
    <property type="project" value="TreeGrafter"/>
</dbReference>
<dbReference type="GO" id="GO:0034382">
    <property type="term" value="P:chylomicron remnant clearance"/>
    <property type="evidence" value="ECO:0000250"/>
    <property type="project" value="UniProtKB"/>
</dbReference>
<dbReference type="GO" id="GO:0034380">
    <property type="term" value="P:high-density lipoprotein particle assembly"/>
    <property type="evidence" value="ECO:0000250"/>
    <property type="project" value="UniProtKB"/>
</dbReference>
<dbReference type="GO" id="GO:0071831">
    <property type="term" value="P:intermediate-density lipoprotein particle clearance"/>
    <property type="evidence" value="ECO:0000250"/>
    <property type="project" value="UniProtKB"/>
</dbReference>
<dbReference type="GO" id="GO:0042158">
    <property type="term" value="P:lipoprotein biosynthetic process"/>
    <property type="evidence" value="ECO:0000250"/>
    <property type="project" value="UniProtKB"/>
</dbReference>
<dbReference type="GO" id="GO:0032438">
    <property type="term" value="P:melanosome organization"/>
    <property type="evidence" value="ECO:0000250"/>
    <property type="project" value="UniProtKB"/>
</dbReference>
<dbReference type="GO" id="GO:1905907">
    <property type="term" value="P:negative regulation of amyloid fibril formation"/>
    <property type="evidence" value="ECO:0000250"/>
    <property type="project" value="UniProtKB"/>
</dbReference>
<dbReference type="GO" id="GO:0033700">
    <property type="term" value="P:phospholipid efflux"/>
    <property type="evidence" value="ECO:0007669"/>
    <property type="project" value="TreeGrafter"/>
</dbReference>
<dbReference type="GO" id="GO:1900223">
    <property type="term" value="P:positive regulation of amyloid-beta clearance"/>
    <property type="evidence" value="ECO:0000250"/>
    <property type="project" value="UniProtKB"/>
</dbReference>
<dbReference type="GO" id="GO:0071830">
    <property type="term" value="P:triglyceride-rich lipoprotein particle clearance"/>
    <property type="evidence" value="ECO:0000250"/>
    <property type="project" value="UniProtKB"/>
</dbReference>
<dbReference type="GO" id="GO:0034447">
    <property type="term" value="P:very-low-density lipoprotein particle clearance"/>
    <property type="evidence" value="ECO:0000250"/>
    <property type="project" value="UniProtKB"/>
</dbReference>
<dbReference type="FunFam" id="1.20.120.20:FF:000002">
    <property type="entry name" value="Apolipoprotein E"/>
    <property type="match status" value="1"/>
</dbReference>
<dbReference type="FunFam" id="1.20.120.20:FF:000003">
    <property type="entry name" value="Apolipoprotein E"/>
    <property type="match status" value="1"/>
</dbReference>
<dbReference type="Gene3D" id="1.20.120.20">
    <property type="entry name" value="Apolipoprotein"/>
    <property type="match status" value="2"/>
</dbReference>
<dbReference type="InterPro" id="IPR000074">
    <property type="entry name" value="ApoA_E"/>
</dbReference>
<dbReference type="InterPro" id="IPR050163">
    <property type="entry name" value="Apolipoprotein_A1/A4/E"/>
</dbReference>
<dbReference type="PANTHER" id="PTHR18976">
    <property type="entry name" value="APOLIPOPROTEIN"/>
    <property type="match status" value="1"/>
</dbReference>
<dbReference type="PANTHER" id="PTHR18976:SF2">
    <property type="entry name" value="APOLIPOPROTEIN E"/>
    <property type="match status" value="1"/>
</dbReference>
<dbReference type="Pfam" id="PF01442">
    <property type="entry name" value="Apolipoprotein"/>
    <property type="match status" value="1"/>
</dbReference>
<dbReference type="SUPFAM" id="SSF58113">
    <property type="entry name" value="Apolipoprotein A-I"/>
    <property type="match status" value="1"/>
</dbReference>
<accession>Q7M2U8</accession>
<keyword id="KW-0162">Chylomicron</keyword>
<keyword id="KW-0967">Endosome</keyword>
<keyword id="KW-0272">Extracellular matrix</keyword>
<keyword id="KW-0325">Glycoprotein</keyword>
<keyword id="KW-0345">HDL</keyword>
<keyword id="KW-0358">Heparin-binding</keyword>
<keyword id="KW-0445">Lipid transport</keyword>
<keyword id="KW-0446">Lipid-binding</keyword>
<keyword id="KW-0558">Oxidation</keyword>
<keyword id="KW-0597">Phosphoprotein</keyword>
<keyword id="KW-1185">Reference proteome</keyword>
<keyword id="KW-0677">Repeat</keyword>
<keyword id="KW-0964">Secreted</keyword>
<keyword id="KW-0732">Signal</keyword>
<keyword id="KW-0813">Transport</keyword>
<keyword id="KW-0850">VLDL</keyword>
<reference key="1">
    <citation type="journal article" date="1998" name="Gene">
        <title>Characterization of the sheep apolipoprotein E (ApoE) gene and allelic variations of the ApoE gene in scrapie Suffolk sheep.</title>
        <authorList>
            <person name="Komatsu Y."/>
            <person name="Horiuchi M."/>
            <person name="Ishiguro N."/>
            <person name="Matsui T."/>
            <person name="Shinagawa M."/>
        </authorList>
    </citation>
    <scope>NUCLEOTIDE SEQUENCE</scope>
    <scope>VARIANT ALA-258</scope>
</reference>
<gene>
    <name type="primary">APOE</name>
</gene>
<organism>
    <name type="scientific">Ovis aries</name>
    <name type="common">Sheep</name>
    <dbReference type="NCBI Taxonomy" id="9940"/>
    <lineage>
        <taxon>Eukaryota</taxon>
        <taxon>Metazoa</taxon>
        <taxon>Chordata</taxon>
        <taxon>Craniata</taxon>
        <taxon>Vertebrata</taxon>
        <taxon>Euteleostomi</taxon>
        <taxon>Mammalia</taxon>
        <taxon>Eutheria</taxon>
        <taxon>Laurasiatheria</taxon>
        <taxon>Artiodactyla</taxon>
        <taxon>Ruminantia</taxon>
        <taxon>Pecora</taxon>
        <taxon>Bovidae</taxon>
        <taxon>Caprinae</taxon>
        <taxon>Ovis</taxon>
    </lineage>
</organism>
<sequence length="316" mass="36215">MKVLWVALVVALLAGCQADMEGELGSEEPLPPEQPRGQDSQPWEQVLGRLWDYLRWVQTLSDQVQEELLNTQVIQELTVLMEETMKEVKAYREELEGQLAPMAQETQARVSKELQAAQARLGSDMEDLRNRLAQYRSEVQAMLGQSTEELRARMASHLRKLRKRLLRDADDLKKRLAVYQAGASEGAERSVSAIRERLRPLVEQSQSRAATLSTQVGQPLLDRAEAWRQKLHGRLEEVGVRAQDRLDKMRQQLEEVRSKVEEQGSQIRLQAEAFQARLRSWFEPLVEDMQRQWAGLVEKVQLALHLSPTSPPSENH</sequence>
<proteinExistence type="inferred from homology"/>
<comment type="function">
    <text evidence="1">APOE is an apolipoprotein, a protein associating with lipid particles, that mainly functions in lipoprotein-mediated lipid transport between organs via the plasma and interstitial fluids. APOE is a core component of plasma lipoproteins and is involved in their production, conversion and clearance. Apolipoproteins are amphipathic molecules that interact both with lipids of the lipoprotein particle core and the aqueous environment of the plasma. As such, APOE associates with chylomicrons, chylomicron remnants, very low density lipoproteins (VLDL) and intermediate density lipoproteins (IDL) but shows a preferential binding to high-density lipoproteins (HDL). It also binds a wide range of cellular receptors including the LDL receptor/LDLR and the very low-density lipoprotein receptor/VLDLR that mediate the cellular uptake of the APOE-containing lipoprotein particles. Finally, APOE also has a heparin-binding activity and binds heparan-sulfate proteoglycans on the surface of cells, a property that supports the capture and the receptor-mediated uptake of APOE-containing lipoproteins by cells.</text>
</comment>
<comment type="subunit">
    <text evidence="1">Homotetramer. May interact with ABCA1; functionally associated with ABCA1 in the biogenesis of HDLs. May interact with APP/A4 amyloid-beta peptide; the interaction is extremely stable in vitro but its physiological significance is unclear. May interact with MAPT. May interact with MAP2. In the cerebrospinal fluid, interacts with secreted SORL1. Interacts with PMEL; this allows the loading of PMEL luminal fragment on ILVs to induce fibril nucleation.</text>
</comment>
<comment type="subcellular location">
    <subcellularLocation>
        <location evidence="1">Secreted</location>
    </subcellularLocation>
    <subcellularLocation>
        <location evidence="1">Secreted</location>
        <location evidence="1">Extracellular space</location>
    </subcellularLocation>
    <subcellularLocation>
        <location evidence="1">Secreted</location>
        <location evidence="1">Extracellular space</location>
        <location evidence="1">Extracellular matrix</location>
    </subcellularLocation>
    <subcellularLocation>
        <location evidence="1">Extracellular vesicle</location>
    </subcellularLocation>
    <subcellularLocation>
        <location evidence="1">Endosome</location>
        <location evidence="1">Multivesicular body</location>
    </subcellularLocation>
    <text evidence="1">In the plasma, APOE is associated with chylomicrons, chylomicrons remnants, VLDL, LDL and HDL lipoproteins. Lipid poor oligomeric APOE is associated with the extracellular matrix in a calcium- and heparan-sulfate proteoglycans-dependent manner. Lipidation induces the release from the extracellular matrix. Colocalizes with CD63 and PMEL at exosomes and in intraluminal vesicles within multivesicular endosomes.</text>
</comment>
<comment type="PTM">
    <text evidence="1">APOE exists as multiple glycosylated and sialylated glycoforms within cells and in plasma. The extent of glycosylation and sialylation are tissue and context specific.</text>
</comment>
<comment type="PTM">
    <text evidence="1">Glycated in plasma VLDL.</text>
</comment>
<comment type="PTM">
    <text evidence="1">Phosphorylated by FAM20C in the extracellular medium.</text>
</comment>
<comment type="similarity">
    <text evidence="5">Belongs to the apolipoprotein A1/A4/E family.</text>
</comment>
<feature type="signal peptide" evidence="3">
    <location>
        <begin position="1"/>
        <end position="18"/>
    </location>
</feature>
<feature type="chain" id="PRO_0000001997" description="Apolipoprotein E">
    <location>
        <begin position="19"/>
        <end position="316"/>
    </location>
</feature>
<feature type="repeat" description="1">
    <location>
        <begin position="79"/>
        <end position="100"/>
    </location>
</feature>
<feature type="repeat" description="2">
    <location>
        <begin position="101"/>
        <end position="122"/>
    </location>
</feature>
<feature type="repeat" description="3">
    <location>
        <begin position="123"/>
        <end position="144"/>
    </location>
</feature>
<feature type="repeat" description="4">
    <location>
        <begin position="145"/>
        <end position="166"/>
    </location>
</feature>
<feature type="repeat" description="5">
    <location>
        <begin position="167"/>
        <end position="188"/>
    </location>
</feature>
<feature type="repeat" description="6">
    <location>
        <begin position="189"/>
        <end position="210"/>
    </location>
</feature>
<feature type="repeat" description="7">
    <location>
        <begin position="211"/>
        <end position="232"/>
    </location>
</feature>
<feature type="repeat" description="8">
    <location>
        <begin position="233"/>
        <end position="254"/>
    </location>
</feature>
<feature type="region of interest" description="8 X 22 AA approximate tandem repeats">
    <location>
        <begin position="79"/>
        <end position="254"/>
    </location>
</feature>
<feature type="region of interest" description="LDL and other lipoprotein receptors binding" evidence="1">
    <location>
        <begin position="157"/>
        <end position="167"/>
    </location>
</feature>
<feature type="region of interest" description="Lipid-binding and lipoprotein association" evidence="1">
    <location>
        <begin position="209"/>
        <end position="289"/>
    </location>
</feature>
<feature type="region of interest" description="Homooligomerization" evidence="1">
    <location>
        <begin position="265"/>
        <end position="316"/>
    </location>
</feature>
<feature type="region of interest" description="Specificity for association with VLDL" evidence="1">
    <location>
        <begin position="277"/>
        <end position="289"/>
    </location>
</feature>
<feature type="binding site" evidence="1">
    <location>
        <begin position="161"/>
        <end position="164"/>
    </location>
    <ligand>
        <name>heparin</name>
        <dbReference type="ChEBI" id="CHEBI:28304"/>
    </ligand>
</feature>
<feature type="binding site" evidence="1">
    <location>
        <begin position="228"/>
        <end position="235"/>
    </location>
    <ligand>
        <name>heparin</name>
        <dbReference type="ChEBI" id="CHEBI:28304"/>
    </ligand>
</feature>
<feature type="modified residue" description="Methionine sulfoxide" evidence="2">
    <location>
        <position position="142"/>
    </location>
</feature>
<feature type="modified residue" description="Phosphoserine" evidence="1">
    <location>
        <position position="146"/>
    </location>
</feature>
<feature type="sequence variant" evidence="4">
    <original>S</original>
    <variation>A</variation>
    <location>
        <position position="258"/>
    </location>
</feature>
<name>APOE_SHEEP</name>
<protein>
    <recommendedName>
        <fullName>Apolipoprotein E</fullName>
        <shortName>Apo-E</shortName>
    </recommendedName>
</protein>